<gene>
    <name evidence="1" type="primary">mdoC</name>
    <name evidence="1" type="synonym">opgC</name>
    <name type="ordered locus">EcolC_2552</name>
</gene>
<accession>B1IV54</accession>
<sequence>MNPVPAQREYFLDSIRAWLMLLGIPFHISLIYSSHTWHVNSAEPSLWLTLFNDFIHSFRMQVFFVISGYFSYMLFLRYPLKKWWKVRVERVGIPMLTAIPLLTLPQFIMLQYVKGKAESWPGLSLYDKYNTLAWELISHLWFLLVLVVMTTLCVWIFKRIRNNLENSDKTNKKFSMVKLSVIFLCLGIGYAVIRRTIFIVYPPILSNGMFNFIVMQTLFYLPFFILGALAFIFPHLKALFTTPSRGCTLAAALAFVAYLLNQRYGSGDAWMYETESVITMVLGLWMVNVVFSFGHRLLNFQSARVTYFVNASLFIYLVHHPLTLFFGAYITPHITSNWLGFLCGLIFVVGIAIILYEIHLRIPLLKFLFSGKPVVKRENDKAPAR</sequence>
<dbReference type="EC" id="2.1.-.-" evidence="1"/>
<dbReference type="EMBL" id="CP000946">
    <property type="protein sequence ID" value="ACA78183.1"/>
    <property type="molecule type" value="Genomic_DNA"/>
</dbReference>
<dbReference type="RefSeq" id="WP_001070350.1">
    <property type="nucleotide sequence ID" value="NZ_MTFT01000032.1"/>
</dbReference>
<dbReference type="GeneID" id="93776367"/>
<dbReference type="KEGG" id="ecl:EcolC_2552"/>
<dbReference type="HOGENOM" id="CLU_036182_2_0_6"/>
<dbReference type="UniPathway" id="UPA00637"/>
<dbReference type="GO" id="GO:0005886">
    <property type="term" value="C:plasma membrane"/>
    <property type="evidence" value="ECO:0007669"/>
    <property type="project" value="UniProtKB-SubCell"/>
</dbReference>
<dbReference type="GO" id="GO:0016747">
    <property type="term" value="F:acyltransferase activity, transferring groups other than amino-acyl groups"/>
    <property type="evidence" value="ECO:0007669"/>
    <property type="project" value="InterPro"/>
</dbReference>
<dbReference type="GO" id="GO:0016741">
    <property type="term" value="F:transferase activity, transferring one-carbon groups"/>
    <property type="evidence" value="ECO:0007669"/>
    <property type="project" value="UniProtKB-UniRule"/>
</dbReference>
<dbReference type="GO" id="GO:0009250">
    <property type="term" value="P:glucan biosynthetic process"/>
    <property type="evidence" value="ECO:0007669"/>
    <property type="project" value="UniProtKB-UniRule"/>
</dbReference>
<dbReference type="HAMAP" id="MF_01066">
    <property type="entry name" value="MdoC_OpgC"/>
    <property type="match status" value="1"/>
</dbReference>
<dbReference type="InterPro" id="IPR002656">
    <property type="entry name" value="Acyl_transf_3_dom"/>
</dbReference>
<dbReference type="InterPro" id="IPR050623">
    <property type="entry name" value="Glucan_succinyl_AcylTrfase"/>
</dbReference>
<dbReference type="InterPro" id="IPR023723">
    <property type="entry name" value="Glucans_biosynth_C"/>
</dbReference>
<dbReference type="NCBIfam" id="NF003014">
    <property type="entry name" value="PRK03854.1"/>
    <property type="match status" value="1"/>
</dbReference>
<dbReference type="PANTHER" id="PTHR36927">
    <property type="entry name" value="BLR4337 PROTEIN"/>
    <property type="match status" value="1"/>
</dbReference>
<dbReference type="PANTHER" id="PTHR36927:SF3">
    <property type="entry name" value="GLUCANS BIOSYNTHESIS PROTEIN C"/>
    <property type="match status" value="1"/>
</dbReference>
<dbReference type="Pfam" id="PF01757">
    <property type="entry name" value="Acyl_transf_3"/>
    <property type="match status" value="1"/>
</dbReference>
<evidence type="ECO:0000255" key="1">
    <source>
        <dbReference type="HAMAP-Rule" id="MF_01066"/>
    </source>
</evidence>
<reference key="1">
    <citation type="submission" date="2008-02" db="EMBL/GenBank/DDBJ databases">
        <title>Complete sequence of Escherichia coli C str. ATCC 8739.</title>
        <authorList>
            <person name="Copeland A."/>
            <person name="Lucas S."/>
            <person name="Lapidus A."/>
            <person name="Glavina del Rio T."/>
            <person name="Dalin E."/>
            <person name="Tice H."/>
            <person name="Bruce D."/>
            <person name="Goodwin L."/>
            <person name="Pitluck S."/>
            <person name="Kiss H."/>
            <person name="Brettin T."/>
            <person name="Detter J.C."/>
            <person name="Han C."/>
            <person name="Kuske C.R."/>
            <person name="Schmutz J."/>
            <person name="Larimer F."/>
            <person name="Land M."/>
            <person name="Hauser L."/>
            <person name="Kyrpides N."/>
            <person name="Mikhailova N."/>
            <person name="Ingram L."/>
            <person name="Richardson P."/>
        </authorList>
    </citation>
    <scope>NUCLEOTIDE SEQUENCE [LARGE SCALE GENOMIC DNA]</scope>
    <source>
        <strain>ATCC 8739 / DSM 1576 / NBRC 3972 / NCIMB 8545 / WDCM 00012 / Crooks</strain>
    </source>
</reference>
<feature type="chain" id="PRO_1000084487" description="Glucans biosynthesis protein C">
    <location>
        <begin position="1"/>
        <end position="385"/>
    </location>
</feature>
<feature type="transmembrane region" description="Helical" evidence="1">
    <location>
        <begin position="17"/>
        <end position="37"/>
    </location>
</feature>
<feature type="transmembrane region" description="Helical" evidence="1">
    <location>
        <begin position="60"/>
        <end position="80"/>
    </location>
</feature>
<feature type="transmembrane region" description="Helical" evidence="1">
    <location>
        <begin position="91"/>
        <end position="111"/>
    </location>
</feature>
<feature type="transmembrane region" description="Helical" evidence="1">
    <location>
        <begin position="137"/>
        <end position="157"/>
    </location>
</feature>
<feature type="transmembrane region" description="Helical" evidence="1">
    <location>
        <begin position="173"/>
        <end position="193"/>
    </location>
</feature>
<feature type="transmembrane region" description="Helical" evidence="1">
    <location>
        <begin position="212"/>
        <end position="232"/>
    </location>
</feature>
<feature type="transmembrane region" description="Helical" evidence="1">
    <location>
        <begin position="239"/>
        <end position="259"/>
    </location>
</feature>
<feature type="transmembrane region" description="Helical" evidence="1">
    <location>
        <begin position="274"/>
        <end position="294"/>
    </location>
</feature>
<feature type="transmembrane region" description="Helical" evidence="1">
    <location>
        <begin position="311"/>
        <end position="331"/>
    </location>
</feature>
<feature type="transmembrane region" description="Helical" evidence="1">
    <location>
        <begin position="338"/>
        <end position="358"/>
    </location>
</feature>
<organism>
    <name type="scientific">Escherichia coli (strain ATCC 8739 / DSM 1576 / NBRC 3972 / NCIMB 8545 / WDCM 00012 / Crooks)</name>
    <dbReference type="NCBI Taxonomy" id="481805"/>
    <lineage>
        <taxon>Bacteria</taxon>
        <taxon>Pseudomonadati</taxon>
        <taxon>Pseudomonadota</taxon>
        <taxon>Gammaproteobacteria</taxon>
        <taxon>Enterobacterales</taxon>
        <taxon>Enterobacteriaceae</taxon>
        <taxon>Escherichia</taxon>
    </lineage>
</organism>
<name>OPGC_ECOLC</name>
<protein>
    <recommendedName>
        <fullName evidence="1">Glucans biosynthesis protein C</fullName>
        <ecNumber evidence="1">2.1.-.-</ecNumber>
    </recommendedName>
</protein>
<comment type="function">
    <text evidence="1">Necessary for the succinyl substitution of periplasmic glucans. Could catalyze the transfer of succinyl residues from the cytoplasmic side of the membrane to the nascent glucan backbones on the periplasmic side of the membrane.</text>
</comment>
<comment type="pathway">
    <text evidence="1">Glycan metabolism; osmoregulated periplasmic glucan (OPG) biosynthesis.</text>
</comment>
<comment type="subcellular location">
    <subcellularLocation>
        <location evidence="1">Cell membrane</location>
        <topology evidence="1">Multi-pass membrane protein</topology>
    </subcellularLocation>
</comment>
<comment type="similarity">
    <text evidence="1">Belongs to the acyltransferase 3 family. OpgC subfamily.</text>
</comment>
<proteinExistence type="inferred from homology"/>
<keyword id="KW-0012">Acyltransferase</keyword>
<keyword id="KW-1003">Cell membrane</keyword>
<keyword id="KW-0472">Membrane</keyword>
<keyword id="KW-0808">Transferase</keyword>
<keyword id="KW-0812">Transmembrane</keyword>
<keyword id="KW-1133">Transmembrane helix</keyword>